<keyword id="KW-0067">ATP-binding</keyword>
<keyword id="KW-0143">Chaperone</keyword>
<keyword id="KW-0547">Nucleotide-binding</keyword>
<keyword id="KW-0597">Phosphoprotein</keyword>
<keyword id="KW-1185">Reference proteome</keyword>
<keyword id="KW-0346">Stress response</keyword>
<dbReference type="EMBL" id="AE016877">
    <property type="protein sequence ID" value="AAP11225.1"/>
    <property type="molecule type" value="Genomic_DNA"/>
</dbReference>
<dbReference type="RefSeq" id="NP_834024.1">
    <property type="nucleotide sequence ID" value="NC_004722.1"/>
</dbReference>
<dbReference type="RefSeq" id="WP_000034700.1">
    <property type="nucleotide sequence ID" value="NZ_CP138336.1"/>
</dbReference>
<dbReference type="SMR" id="Q818E9"/>
<dbReference type="STRING" id="226900.BC_4312"/>
<dbReference type="MetOSite" id="Q818E9"/>
<dbReference type="GeneID" id="93006786"/>
<dbReference type="KEGG" id="bce:BC4312"/>
<dbReference type="PATRIC" id="fig|226900.8.peg.4459"/>
<dbReference type="HOGENOM" id="CLU_005965_2_4_9"/>
<dbReference type="OrthoDB" id="9766019at2"/>
<dbReference type="Proteomes" id="UP000001417">
    <property type="component" value="Chromosome"/>
</dbReference>
<dbReference type="GO" id="GO:0005524">
    <property type="term" value="F:ATP binding"/>
    <property type="evidence" value="ECO:0007669"/>
    <property type="project" value="UniProtKB-UniRule"/>
</dbReference>
<dbReference type="GO" id="GO:0016887">
    <property type="term" value="F:ATP hydrolysis activity"/>
    <property type="evidence" value="ECO:0000318"/>
    <property type="project" value="GO_Central"/>
</dbReference>
<dbReference type="GO" id="GO:0140662">
    <property type="term" value="F:ATP-dependent protein folding chaperone"/>
    <property type="evidence" value="ECO:0007669"/>
    <property type="project" value="InterPro"/>
</dbReference>
<dbReference type="GO" id="GO:0031072">
    <property type="term" value="F:heat shock protein binding"/>
    <property type="evidence" value="ECO:0000318"/>
    <property type="project" value="GO_Central"/>
</dbReference>
<dbReference type="GO" id="GO:0044183">
    <property type="term" value="F:protein folding chaperone"/>
    <property type="evidence" value="ECO:0000318"/>
    <property type="project" value="GO_Central"/>
</dbReference>
<dbReference type="GO" id="GO:0051082">
    <property type="term" value="F:unfolded protein binding"/>
    <property type="evidence" value="ECO:0007669"/>
    <property type="project" value="InterPro"/>
</dbReference>
<dbReference type="GO" id="GO:0051085">
    <property type="term" value="P:chaperone cofactor-dependent protein refolding"/>
    <property type="evidence" value="ECO:0000318"/>
    <property type="project" value="GO_Central"/>
</dbReference>
<dbReference type="GO" id="GO:0042026">
    <property type="term" value="P:protein refolding"/>
    <property type="evidence" value="ECO:0000318"/>
    <property type="project" value="GO_Central"/>
</dbReference>
<dbReference type="CDD" id="cd10234">
    <property type="entry name" value="ASKHA_NBD_HSP70_DnaK-like"/>
    <property type="match status" value="1"/>
</dbReference>
<dbReference type="FunFam" id="2.60.34.10:FF:000014">
    <property type="entry name" value="Chaperone protein DnaK HSP70"/>
    <property type="match status" value="1"/>
</dbReference>
<dbReference type="FunFam" id="1.20.1270.10:FF:000004">
    <property type="entry name" value="Molecular chaperone DnaK"/>
    <property type="match status" value="1"/>
</dbReference>
<dbReference type="FunFam" id="3.30.420.40:FF:000071">
    <property type="entry name" value="Molecular chaperone DnaK"/>
    <property type="match status" value="1"/>
</dbReference>
<dbReference type="FunFam" id="3.90.640.10:FF:000003">
    <property type="entry name" value="Molecular chaperone DnaK"/>
    <property type="match status" value="1"/>
</dbReference>
<dbReference type="Gene3D" id="1.20.1270.10">
    <property type="match status" value="1"/>
</dbReference>
<dbReference type="Gene3D" id="3.30.420.40">
    <property type="match status" value="2"/>
</dbReference>
<dbReference type="Gene3D" id="3.90.640.10">
    <property type="entry name" value="Actin, Chain A, domain 4"/>
    <property type="match status" value="1"/>
</dbReference>
<dbReference type="Gene3D" id="2.60.34.10">
    <property type="entry name" value="Substrate Binding Domain Of DNAk, Chain A, domain 1"/>
    <property type="match status" value="1"/>
</dbReference>
<dbReference type="HAMAP" id="MF_00332">
    <property type="entry name" value="DnaK"/>
    <property type="match status" value="1"/>
</dbReference>
<dbReference type="InterPro" id="IPR043129">
    <property type="entry name" value="ATPase_NBD"/>
</dbReference>
<dbReference type="InterPro" id="IPR012725">
    <property type="entry name" value="Chaperone_DnaK"/>
</dbReference>
<dbReference type="InterPro" id="IPR018181">
    <property type="entry name" value="Heat_shock_70_CS"/>
</dbReference>
<dbReference type="InterPro" id="IPR029048">
    <property type="entry name" value="HSP70_C_sf"/>
</dbReference>
<dbReference type="InterPro" id="IPR029047">
    <property type="entry name" value="HSP70_peptide-bd_sf"/>
</dbReference>
<dbReference type="InterPro" id="IPR013126">
    <property type="entry name" value="Hsp_70_fam"/>
</dbReference>
<dbReference type="NCBIfam" id="NF001413">
    <property type="entry name" value="PRK00290.1"/>
    <property type="match status" value="1"/>
</dbReference>
<dbReference type="NCBIfam" id="TIGR02350">
    <property type="entry name" value="prok_dnaK"/>
    <property type="match status" value="1"/>
</dbReference>
<dbReference type="PANTHER" id="PTHR19375">
    <property type="entry name" value="HEAT SHOCK PROTEIN 70KDA"/>
    <property type="match status" value="1"/>
</dbReference>
<dbReference type="Pfam" id="PF00012">
    <property type="entry name" value="HSP70"/>
    <property type="match status" value="1"/>
</dbReference>
<dbReference type="PRINTS" id="PR00301">
    <property type="entry name" value="HEATSHOCK70"/>
</dbReference>
<dbReference type="SUPFAM" id="SSF53067">
    <property type="entry name" value="Actin-like ATPase domain"/>
    <property type="match status" value="2"/>
</dbReference>
<dbReference type="SUPFAM" id="SSF100934">
    <property type="entry name" value="Heat shock protein 70kD (HSP70), C-terminal subdomain"/>
    <property type="match status" value="1"/>
</dbReference>
<dbReference type="SUPFAM" id="SSF100920">
    <property type="entry name" value="Heat shock protein 70kD (HSP70), peptide-binding domain"/>
    <property type="match status" value="1"/>
</dbReference>
<dbReference type="PROSITE" id="PS00297">
    <property type="entry name" value="HSP70_1"/>
    <property type="match status" value="1"/>
</dbReference>
<dbReference type="PROSITE" id="PS00329">
    <property type="entry name" value="HSP70_2"/>
    <property type="match status" value="1"/>
</dbReference>
<dbReference type="PROSITE" id="PS01036">
    <property type="entry name" value="HSP70_3"/>
    <property type="match status" value="1"/>
</dbReference>
<evidence type="ECO:0000255" key="1">
    <source>
        <dbReference type="HAMAP-Rule" id="MF_00332"/>
    </source>
</evidence>
<evidence type="ECO:0000256" key="2">
    <source>
        <dbReference type="SAM" id="MobiDB-lite"/>
    </source>
</evidence>
<accession>Q818E9</accession>
<name>DNAK_BACCR</name>
<organism>
    <name type="scientific">Bacillus cereus (strain ATCC 14579 / DSM 31 / CCUG 7414 / JCM 2152 / NBRC 15305 / NCIMB 9373 / NCTC 2599 / NRRL B-3711)</name>
    <dbReference type="NCBI Taxonomy" id="226900"/>
    <lineage>
        <taxon>Bacteria</taxon>
        <taxon>Bacillati</taxon>
        <taxon>Bacillota</taxon>
        <taxon>Bacilli</taxon>
        <taxon>Bacillales</taxon>
        <taxon>Bacillaceae</taxon>
        <taxon>Bacillus</taxon>
        <taxon>Bacillus cereus group</taxon>
    </lineage>
</organism>
<comment type="function">
    <text evidence="1">Acts as a chaperone.</text>
</comment>
<comment type="induction">
    <text evidence="1">By stress conditions e.g. heat shock.</text>
</comment>
<comment type="similarity">
    <text evidence="1">Belongs to the heat shock protein 70 family.</text>
</comment>
<sequence length="611" mass="65766">MSKIIGIDLGTTNSCVAVMEGGEPKVIPNPEGNRTTPSVVAFKNEERQVGEVAKRQAITNPNTIMSVKRHMGTDYKVEVEGKDYTPQEISAIILQNLKASAEAYLGETVTKAVITVPAYFNDAERQATKDAGRIAGLEVERIINEPTAAALAYGLEKQDEEQKILVYDLGGGTFDVSILELADGTFEVISTAGDNRLGGDDFDQVIIDHLVAEFKKENNIDLSQDKMALQRLKDAAEKAKKDLSGVTQTQISLPFISAGAAGPLHLELTLTRAKFEELSAGLVERTLEPTRRALKDAGFAPSELDKVILVGGSTRIPAVQEAIKRETGKEPYKGVNPDEVVALGAAVQGGVLTGDVEGVLLLDVTPLSLGIETMGGVFTKLIERNTTIPTSKSQVFSTAADNQPAVDIHVLQGERPMSADNKTLGRFQLTDLPPAPRGIPQIEVTFDIDANGIVNVRAKDLGTSKEQAITIQSSSGLSDEEVERMVQEAEANADADQKRKEEVELRNEADQLVFQTDKVVKDLEGKVDAAEVAKATEAKEALQAAIEKNELEEIRAKKDALQEIVQQLTVKLYEQAQAAAGQAEGAQGAQDAGAKKDNVVDAEFEEVKEDK</sequence>
<proteinExistence type="inferred from homology"/>
<reference key="1">
    <citation type="journal article" date="2003" name="Nature">
        <title>Genome sequence of Bacillus cereus and comparative analysis with Bacillus anthracis.</title>
        <authorList>
            <person name="Ivanova N."/>
            <person name="Sorokin A."/>
            <person name="Anderson I."/>
            <person name="Galleron N."/>
            <person name="Candelon B."/>
            <person name="Kapatral V."/>
            <person name="Bhattacharyya A."/>
            <person name="Reznik G."/>
            <person name="Mikhailova N."/>
            <person name="Lapidus A."/>
            <person name="Chu L."/>
            <person name="Mazur M."/>
            <person name="Goltsman E."/>
            <person name="Larsen N."/>
            <person name="D'Souza M."/>
            <person name="Walunas T."/>
            <person name="Grechkin Y."/>
            <person name="Pusch G."/>
            <person name="Haselkorn R."/>
            <person name="Fonstein M."/>
            <person name="Ehrlich S.D."/>
            <person name="Overbeek R."/>
            <person name="Kyrpides N.C."/>
        </authorList>
    </citation>
    <scope>NUCLEOTIDE SEQUENCE [LARGE SCALE GENOMIC DNA]</scope>
    <source>
        <strain>ATCC 14579 / DSM 31 / CCUG 7414 / JCM 2152 / NBRC 15305 / NCIMB 9373 / NCTC 2599 / NRRL B-3711</strain>
    </source>
</reference>
<feature type="chain" id="PRO_0000078415" description="Chaperone protein DnaK">
    <location>
        <begin position="1"/>
        <end position="611"/>
    </location>
</feature>
<feature type="region of interest" description="Disordered" evidence="2">
    <location>
        <begin position="579"/>
        <end position="598"/>
    </location>
</feature>
<feature type="compositionally biased region" description="Low complexity" evidence="2">
    <location>
        <begin position="579"/>
        <end position="592"/>
    </location>
</feature>
<feature type="modified residue" description="Phosphothreonine; by autocatalysis" evidence="1">
    <location>
        <position position="173"/>
    </location>
</feature>
<gene>
    <name evidence="1" type="primary">dnaK</name>
    <name type="ordered locus">BC_4312</name>
</gene>
<protein>
    <recommendedName>
        <fullName evidence="1">Chaperone protein DnaK</fullName>
    </recommendedName>
    <alternativeName>
        <fullName evidence="1">HSP70</fullName>
    </alternativeName>
    <alternativeName>
        <fullName evidence="1">Heat shock 70 kDa protein</fullName>
    </alternativeName>
    <alternativeName>
        <fullName evidence="1">Heat shock protein 70</fullName>
    </alternativeName>
</protein>